<name>TDXH_IGNH4</name>
<organism>
    <name type="scientific">Ignicoccus hospitalis (strain KIN4/I / DSM 18386 / JCM 14125)</name>
    <dbReference type="NCBI Taxonomy" id="453591"/>
    <lineage>
        <taxon>Archaea</taxon>
        <taxon>Thermoproteota</taxon>
        <taxon>Thermoprotei</taxon>
        <taxon>Desulfurococcales</taxon>
        <taxon>Desulfurococcaceae</taxon>
        <taxon>Ignicoccus</taxon>
    </lineage>
</organism>
<keyword id="KW-0049">Antioxidant</keyword>
<keyword id="KW-0963">Cytoplasm</keyword>
<keyword id="KW-1015">Disulfide bond</keyword>
<keyword id="KW-0560">Oxidoreductase</keyword>
<keyword id="KW-0575">Peroxidase</keyword>
<keyword id="KW-0676">Redox-active center</keyword>
<keyword id="KW-1185">Reference proteome</keyword>
<feature type="chain" id="PRO_1000049618" description="Peroxiredoxin">
    <location>
        <begin position="1"/>
        <end position="234"/>
    </location>
</feature>
<feature type="domain" description="Thioredoxin" evidence="1">
    <location>
        <begin position="6"/>
        <end position="161"/>
    </location>
</feature>
<feature type="active site" description="Cysteine sulfenic acid (-SOH) intermediate" evidence="1">
    <location>
        <position position="48"/>
    </location>
</feature>
<feature type="binding site" evidence="1">
    <location>
        <position position="124"/>
    </location>
    <ligand>
        <name>substrate</name>
    </ligand>
</feature>
<feature type="disulfide bond" description="Interchain (with C-209); in linked form" evidence="1">
    <location>
        <position position="48"/>
    </location>
</feature>
<feature type="disulfide bond" description="Alternate" evidence="1">
    <location>
        <begin position="203"/>
        <end position="209"/>
    </location>
</feature>
<feature type="disulfide bond" description="Interchain (with C-48); in linked form" evidence="1">
    <location>
        <position position="209"/>
    </location>
</feature>
<reference key="1">
    <citation type="journal article" date="2008" name="Genome Biol.">
        <title>A genomic analysis of the archaeal system Ignicoccus hospitalis-Nanoarchaeum equitans.</title>
        <authorList>
            <person name="Podar M."/>
            <person name="Anderson I."/>
            <person name="Makarova K.S."/>
            <person name="Elkins J.G."/>
            <person name="Ivanova N."/>
            <person name="Wall M.A."/>
            <person name="Lykidis A."/>
            <person name="Mavromatis K."/>
            <person name="Sun H."/>
            <person name="Hudson M.E."/>
            <person name="Chen W."/>
            <person name="Deciu C."/>
            <person name="Hutchison D."/>
            <person name="Eads J.R."/>
            <person name="Anderson A."/>
            <person name="Fernandes F."/>
            <person name="Szeto E."/>
            <person name="Lapidus A."/>
            <person name="Kyrpides N.C."/>
            <person name="Saier M.H. Jr."/>
            <person name="Richardson P.M."/>
            <person name="Rachel R."/>
            <person name="Huber H."/>
            <person name="Eisen J.A."/>
            <person name="Koonin E.V."/>
            <person name="Keller M."/>
            <person name="Stetter K.O."/>
        </authorList>
    </citation>
    <scope>NUCLEOTIDE SEQUENCE [LARGE SCALE GENOMIC DNA]</scope>
    <source>
        <strain>KIN4/I / DSM 18386 / JCM 14125</strain>
    </source>
</reference>
<dbReference type="EC" id="1.11.1.24" evidence="1"/>
<dbReference type="EMBL" id="CP000816">
    <property type="protein sequence ID" value="ABU81642.1"/>
    <property type="molecule type" value="Genomic_DNA"/>
</dbReference>
<dbReference type="RefSeq" id="WP_011998494.1">
    <property type="nucleotide sequence ID" value="NC_009776.1"/>
</dbReference>
<dbReference type="SMR" id="A8A9P0"/>
<dbReference type="STRING" id="453591.Igni_0459"/>
<dbReference type="GeneID" id="5561752"/>
<dbReference type="KEGG" id="iho:Igni_0459"/>
<dbReference type="eggNOG" id="arCOG00312">
    <property type="taxonomic scope" value="Archaea"/>
</dbReference>
<dbReference type="HOGENOM" id="CLU_042529_4_4_2"/>
<dbReference type="OrthoDB" id="6924at2157"/>
<dbReference type="PhylomeDB" id="A8A9P0"/>
<dbReference type="Proteomes" id="UP000000262">
    <property type="component" value="Chromosome"/>
</dbReference>
<dbReference type="GO" id="GO:0005829">
    <property type="term" value="C:cytosol"/>
    <property type="evidence" value="ECO:0007669"/>
    <property type="project" value="TreeGrafter"/>
</dbReference>
<dbReference type="GO" id="GO:0008379">
    <property type="term" value="F:thioredoxin peroxidase activity"/>
    <property type="evidence" value="ECO:0007669"/>
    <property type="project" value="TreeGrafter"/>
</dbReference>
<dbReference type="GO" id="GO:0045454">
    <property type="term" value="P:cell redox homeostasis"/>
    <property type="evidence" value="ECO:0007669"/>
    <property type="project" value="TreeGrafter"/>
</dbReference>
<dbReference type="GO" id="GO:0033554">
    <property type="term" value="P:cellular response to stress"/>
    <property type="evidence" value="ECO:0007669"/>
    <property type="project" value="TreeGrafter"/>
</dbReference>
<dbReference type="GO" id="GO:0042744">
    <property type="term" value="P:hydrogen peroxide catabolic process"/>
    <property type="evidence" value="ECO:0007669"/>
    <property type="project" value="TreeGrafter"/>
</dbReference>
<dbReference type="GO" id="GO:0006979">
    <property type="term" value="P:response to oxidative stress"/>
    <property type="evidence" value="ECO:0007669"/>
    <property type="project" value="TreeGrafter"/>
</dbReference>
<dbReference type="CDD" id="cd03016">
    <property type="entry name" value="PRX_1cys"/>
    <property type="match status" value="1"/>
</dbReference>
<dbReference type="FunFam" id="3.30.1020.10:FF:000002">
    <property type="entry name" value="Peroxiredoxin"/>
    <property type="match status" value="1"/>
</dbReference>
<dbReference type="FunFam" id="3.40.30.10:FF:000011">
    <property type="entry name" value="Peroxiredoxin PRX1"/>
    <property type="match status" value="1"/>
</dbReference>
<dbReference type="Gene3D" id="3.30.1020.10">
    <property type="entry name" value="Antioxidant, Horf6, Chain A, domain2"/>
    <property type="match status" value="1"/>
</dbReference>
<dbReference type="Gene3D" id="3.40.30.10">
    <property type="entry name" value="Glutaredoxin"/>
    <property type="match status" value="1"/>
</dbReference>
<dbReference type="HAMAP" id="MF_00401">
    <property type="entry name" value="Peroxiredoxin"/>
    <property type="match status" value="1"/>
</dbReference>
<dbReference type="InterPro" id="IPR000866">
    <property type="entry name" value="AhpC/TSA"/>
</dbReference>
<dbReference type="InterPro" id="IPR050217">
    <property type="entry name" value="Peroxiredoxin"/>
</dbReference>
<dbReference type="InterPro" id="IPR024706">
    <property type="entry name" value="Peroxiredoxin_AhpC-typ"/>
</dbReference>
<dbReference type="InterPro" id="IPR019479">
    <property type="entry name" value="Peroxiredoxin_C"/>
</dbReference>
<dbReference type="InterPro" id="IPR022915">
    <property type="entry name" value="Peroxiredoxin_TDXH"/>
</dbReference>
<dbReference type="InterPro" id="IPR045020">
    <property type="entry name" value="PRX_1cys"/>
</dbReference>
<dbReference type="InterPro" id="IPR036249">
    <property type="entry name" value="Thioredoxin-like_sf"/>
</dbReference>
<dbReference type="InterPro" id="IPR013766">
    <property type="entry name" value="Thioredoxin_domain"/>
</dbReference>
<dbReference type="NCBIfam" id="NF009668">
    <property type="entry name" value="PRK13189.1"/>
    <property type="match status" value="1"/>
</dbReference>
<dbReference type="PANTHER" id="PTHR10681:SF121">
    <property type="entry name" value="ALKYL HYDROPEROXIDE REDUCTASE C"/>
    <property type="match status" value="1"/>
</dbReference>
<dbReference type="PANTHER" id="PTHR10681">
    <property type="entry name" value="THIOREDOXIN PEROXIDASE"/>
    <property type="match status" value="1"/>
</dbReference>
<dbReference type="Pfam" id="PF10417">
    <property type="entry name" value="1-cysPrx_C"/>
    <property type="match status" value="1"/>
</dbReference>
<dbReference type="Pfam" id="PF00578">
    <property type="entry name" value="AhpC-TSA"/>
    <property type="match status" value="1"/>
</dbReference>
<dbReference type="PIRSF" id="PIRSF000239">
    <property type="entry name" value="AHPC"/>
    <property type="match status" value="1"/>
</dbReference>
<dbReference type="SUPFAM" id="SSF52833">
    <property type="entry name" value="Thioredoxin-like"/>
    <property type="match status" value="1"/>
</dbReference>
<dbReference type="PROSITE" id="PS51352">
    <property type="entry name" value="THIOREDOXIN_2"/>
    <property type="match status" value="1"/>
</dbReference>
<protein>
    <recommendedName>
        <fullName evidence="1">Peroxiredoxin</fullName>
        <ecNumber evidence="1">1.11.1.24</ecNumber>
    </recommendedName>
    <alternativeName>
        <fullName evidence="1">Thioredoxin peroxidase</fullName>
    </alternativeName>
    <alternativeName>
        <fullName evidence="1">Thioredoxin-dependent peroxiredoxin</fullName>
    </alternativeName>
</protein>
<comment type="function">
    <text evidence="1">Thiol-specific peroxidase that catalyzes the reduction of hydrogen peroxide and organic hydroperoxides to water and alcohols, respectively. Plays a role in cell protection against oxidative stress by detoxifying peroxides.</text>
</comment>
<comment type="catalytic activity">
    <reaction evidence="1">
        <text>a hydroperoxide + [thioredoxin]-dithiol = an alcohol + [thioredoxin]-disulfide + H2O</text>
        <dbReference type="Rhea" id="RHEA:62620"/>
        <dbReference type="Rhea" id="RHEA-COMP:10698"/>
        <dbReference type="Rhea" id="RHEA-COMP:10700"/>
        <dbReference type="ChEBI" id="CHEBI:15377"/>
        <dbReference type="ChEBI" id="CHEBI:29950"/>
        <dbReference type="ChEBI" id="CHEBI:30879"/>
        <dbReference type="ChEBI" id="CHEBI:35924"/>
        <dbReference type="ChEBI" id="CHEBI:50058"/>
        <dbReference type="EC" id="1.11.1.24"/>
    </reaction>
</comment>
<comment type="subunit">
    <text evidence="1">Homodecamer. Pentamer of dimers that assemble into a ring structure.</text>
</comment>
<comment type="subcellular location">
    <subcellularLocation>
        <location evidence="1">Cytoplasm</location>
    </subcellularLocation>
</comment>
<comment type="miscellaneous">
    <text evidence="1">The active site is a conserved redox-active cysteine residue, the peroxidatic cysteine (C(P)), which makes the nucleophilic attack on the peroxide substrate. The peroxide oxidizes the C(P)-SH to cysteine sulfenic acid (C(P)-SOH), which then reacts with another cysteine residue, the resolving cysteine (C(R)), to form a disulfide bridge. The disulfide is subsequently reduced by an appropriate electron donor to complete the catalytic cycle. Although the primary sequence of this enzyme is similar to those of the 1-Cys Prx6 enzymes, its catalytic properties resemble those of the typical 2-Cys Prxs and C(R) is provided by the other dimeric subunit to form an intersubunit disulfide. The disulfide is subsequently reduced by thioredoxin.</text>
</comment>
<comment type="similarity">
    <text evidence="1">Belongs to the peroxiredoxin family. Prx6 subfamily.</text>
</comment>
<evidence type="ECO:0000255" key="1">
    <source>
        <dbReference type="HAMAP-Rule" id="MF_00401"/>
    </source>
</evidence>
<sequence length="234" mass="26711">MPGQIPLIGEKLPEMVVHTDHGPKKLPDDYKGKWLVIFSHPADFTPVCTTEFVAFAKRYEDFKKLNTELLGLSVDNSFSHIKWKEWIKEKLNVEIPFPIIADPLGQVATKLGMLHPEGGVVTVRAVFIVDPEGKVRAILYYPLNVGRNIDEILRLLKALQVTDKLGRATPANWPCNEIVKDHVIVPPASTEQEAKERLQKYECFDWWFCHEKAPAEDVEEAKKFLERPAKELCK</sequence>
<gene>
    <name type="ordered locus">Igni_0459</name>
</gene>
<accession>A8A9P0</accession>
<proteinExistence type="inferred from homology"/>